<proteinExistence type="inferred from homology"/>
<gene>
    <name evidence="1" type="primary">menC</name>
    <name type="ordered locus">VF_1667</name>
</gene>
<organism>
    <name type="scientific">Aliivibrio fischeri (strain ATCC 700601 / ES114)</name>
    <name type="common">Vibrio fischeri</name>
    <dbReference type="NCBI Taxonomy" id="312309"/>
    <lineage>
        <taxon>Bacteria</taxon>
        <taxon>Pseudomonadati</taxon>
        <taxon>Pseudomonadota</taxon>
        <taxon>Gammaproteobacteria</taxon>
        <taxon>Vibrionales</taxon>
        <taxon>Vibrionaceae</taxon>
        <taxon>Aliivibrio</taxon>
    </lineage>
</organism>
<name>MENC_ALIF1</name>
<accession>Q5E484</accession>
<evidence type="ECO:0000255" key="1">
    <source>
        <dbReference type="HAMAP-Rule" id="MF_00470"/>
    </source>
</evidence>
<comment type="function">
    <text evidence="1">Converts 2-succinyl-6-hydroxy-2,4-cyclohexadiene-1-carboxylate (SHCHC) to 2-succinylbenzoate (OSB).</text>
</comment>
<comment type="catalytic activity">
    <reaction evidence="1">
        <text>(1R,6R)-6-hydroxy-2-succinyl-cyclohexa-2,4-diene-1-carboxylate = 2-succinylbenzoate + H2O</text>
        <dbReference type="Rhea" id="RHEA:10196"/>
        <dbReference type="ChEBI" id="CHEBI:15377"/>
        <dbReference type="ChEBI" id="CHEBI:18325"/>
        <dbReference type="ChEBI" id="CHEBI:58689"/>
        <dbReference type="EC" id="4.2.1.113"/>
    </reaction>
</comment>
<comment type="cofactor">
    <cofactor evidence="1">
        <name>a divalent metal cation</name>
        <dbReference type="ChEBI" id="CHEBI:60240"/>
    </cofactor>
</comment>
<comment type="pathway">
    <text evidence="1">Quinol/quinone metabolism; 1,4-dihydroxy-2-naphthoate biosynthesis; 1,4-dihydroxy-2-naphthoate from chorismate: step 4/7.</text>
</comment>
<comment type="pathway">
    <text evidence="1">Quinol/quinone metabolism; menaquinone biosynthesis.</text>
</comment>
<comment type="similarity">
    <text evidence="1">Belongs to the mandelate racemase/muconate lactonizing enzyme family. MenC type 1 subfamily.</text>
</comment>
<dbReference type="EC" id="4.2.1.113" evidence="1"/>
<dbReference type="EMBL" id="CP000020">
    <property type="protein sequence ID" value="AAW86162.1"/>
    <property type="molecule type" value="Genomic_DNA"/>
</dbReference>
<dbReference type="RefSeq" id="WP_011262223.1">
    <property type="nucleotide sequence ID" value="NC_006840.2"/>
</dbReference>
<dbReference type="RefSeq" id="YP_205050.1">
    <property type="nucleotide sequence ID" value="NC_006840.2"/>
</dbReference>
<dbReference type="SMR" id="Q5E484"/>
<dbReference type="STRING" id="312309.VF_1667"/>
<dbReference type="EnsemblBacteria" id="AAW86162">
    <property type="protein sequence ID" value="AAW86162"/>
    <property type="gene ID" value="VF_1667"/>
</dbReference>
<dbReference type="GeneID" id="54164361"/>
<dbReference type="KEGG" id="vfi:VF_1667"/>
<dbReference type="PATRIC" id="fig|312309.11.peg.1688"/>
<dbReference type="eggNOG" id="COG1441">
    <property type="taxonomic scope" value="Bacteria"/>
</dbReference>
<dbReference type="HOGENOM" id="CLU_030273_0_1_6"/>
<dbReference type="OrthoDB" id="3725747at2"/>
<dbReference type="UniPathway" id="UPA00079"/>
<dbReference type="UniPathway" id="UPA01057">
    <property type="reaction ID" value="UER00165"/>
</dbReference>
<dbReference type="Proteomes" id="UP000000537">
    <property type="component" value="Chromosome I"/>
</dbReference>
<dbReference type="GO" id="GO:0000287">
    <property type="term" value="F:magnesium ion binding"/>
    <property type="evidence" value="ECO:0007669"/>
    <property type="project" value="UniProtKB-UniRule"/>
</dbReference>
<dbReference type="GO" id="GO:0043748">
    <property type="term" value="F:O-succinylbenzoate synthase activity"/>
    <property type="evidence" value="ECO:0007669"/>
    <property type="project" value="UniProtKB-EC"/>
</dbReference>
<dbReference type="GO" id="GO:0009234">
    <property type="term" value="P:menaquinone biosynthetic process"/>
    <property type="evidence" value="ECO:0007669"/>
    <property type="project" value="UniProtKB-UniRule"/>
</dbReference>
<dbReference type="CDD" id="cd03320">
    <property type="entry name" value="OSBS"/>
    <property type="match status" value="1"/>
</dbReference>
<dbReference type="Gene3D" id="3.20.20.120">
    <property type="entry name" value="Enolase-like C-terminal domain"/>
    <property type="match status" value="1"/>
</dbReference>
<dbReference type="Gene3D" id="3.30.390.10">
    <property type="entry name" value="Enolase-like, N-terminal domain"/>
    <property type="match status" value="1"/>
</dbReference>
<dbReference type="HAMAP" id="MF_00470">
    <property type="entry name" value="MenC_1"/>
    <property type="match status" value="1"/>
</dbReference>
<dbReference type="InterPro" id="IPR036849">
    <property type="entry name" value="Enolase-like_C_sf"/>
</dbReference>
<dbReference type="InterPro" id="IPR029017">
    <property type="entry name" value="Enolase-like_N"/>
</dbReference>
<dbReference type="InterPro" id="IPR029065">
    <property type="entry name" value="Enolase_C-like"/>
</dbReference>
<dbReference type="InterPro" id="IPR013342">
    <property type="entry name" value="Mandelate_racemase_C"/>
</dbReference>
<dbReference type="InterPro" id="IPR010196">
    <property type="entry name" value="OSB_synthase_MenC1"/>
</dbReference>
<dbReference type="InterPro" id="IPR041338">
    <property type="entry name" value="OSBS_N"/>
</dbReference>
<dbReference type="NCBIfam" id="TIGR01927">
    <property type="entry name" value="menC_gam_Gplu"/>
    <property type="match status" value="1"/>
</dbReference>
<dbReference type="NCBIfam" id="NF003473">
    <property type="entry name" value="PRK05105.1"/>
    <property type="match status" value="1"/>
</dbReference>
<dbReference type="PANTHER" id="PTHR48073:SF2">
    <property type="entry name" value="O-SUCCINYLBENZOATE SYNTHASE"/>
    <property type="match status" value="1"/>
</dbReference>
<dbReference type="PANTHER" id="PTHR48073">
    <property type="entry name" value="O-SUCCINYLBENZOATE SYNTHASE-RELATED"/>
    <property type="match status" value="1"/>
</dbReference>
<dbReference type="Pfam" id="PF21508">
    <property type="entry name" value="MenC_N"/>
    <property type="match status" value="1"/>
</dbReference>
<dbReference type="Pfam" id="PF13378">
    <property type="entry name" value="MR_MLE_C"/>
    <property type="match status" value="1"/>
</dbReference>
<dbReference type="SFLD" id="SFLDS00001">
    <property type="entry name" value="Enolase"/>
    <property type="match status" value="1"/>
</dbReference>
<dbReference type="SFLD" id="SFLDF00009">
    <property type="entry name" value="o-succinylbenzoate_synthase"/>
    <property type="match status" value="1"/>
</dbReference>
<dbReference type="SMART" id="SM00922">
    <property type="entry name" value="MR_MLE"/>
    <property type="match status" value="1"/>
</dbReference>
<dbReference type="SUPFAM" id="SSF51604">
    <property type="entry name" value="Enolase C-terminal domain-like"/>
    <property type="match status" value="1"/>
</dbReference>
<dbReference type="SUPFAM" id="SSF54826">
    <property type="entry name" value="Enolase N-terminal domain-like"/>
    <property type="match status" value="1"/>
</dbReference>
<reference key="1">
    <citation type="journal article" date="2005" name="Proc. Natl. Acad. Sci. U.S.A.">
        <title>Complete genome sequence of Vibrio fischeri: a symbiotic bacterium with pathogenic congeners.</title>
        <authorList>
            <person name="Ruby E.G."/>
            <person name="Urbanowski M."/>
            <person name="Campbell J."/>
            <person name="Dunn A."/>
            <person name="Faini M."/>
            <person name="Gunsalus R."/>
            <person name="Lostroh P."/>
            <person name="Lupp C."/>
            <person name="McCann J."/>
            <person name="Millikan D."/>
            <person name="Schaefer A."/>
            <person name="Stabb E."/>
            <person name="Stevens A."/>
            <person name="Visick K."/>
            <person name="Whistler C."/>
            <person name="Greenberg E.P."/>
        </authorList>
    </citation>
    <scope>NUCLEOTIDE SEQUENCE [LARGE SCALE GENOMIC DNA]</scope>
    <source>
        <strain>ATCC 700601 / ES114</strain>
    </source>
</reference>
<keyword id="KW-0456">Lyase</keyword>
<keyword id="KW-0460">Magnesium</keyword>
<keyword id="KW-0474">Menaquinone biosynthesis</keyword>
<keyword id="KW-0479">Metal-binding</keyword>
<keyword id="KW-1185">Reference proteome</keyword>
<sequence>MKTAKIYQYQLPMDSGVILREQRLQQRDGLVIELSDGIHTARGEVAPLPEFSQETLEQAREDLISLTQSWLNNEELDLDSNCPSVAFGFSMALLELEKQLPQEGNYQAAPLCSGDPDDLVVKLNEMSGKKIAKIKVGLYEPIRDGMVVNMFLELISDLSLRLDANRGWTAKKAEQFANYVHPQFRSRIEFLEEPCATPEESLAFSKATDIAIAWDETVRDDGFTVKTQEGVTAIVIKPTLVGSVEKCISLIEQAHQLGMQAVISSSIESSLALTQLARLAAWKTPETIPGLDTIDLFKMQLDTSWPNCDLPVAQLADLEAIWEN</sequence>
<feature type="chain" id="PRO_1000013815" description="o-succinylbenzoate synthase">
    <location>
        <begin position="1"/>
        <end position="324"/>
    </location>
</feature>
<feature type="active site" description="Proton donor" evidence="1">
    <location>
        <position position="135"/>
    </location>
</feature>
<feature type="active site" description="Proton acceptor" evidence="1">
    <location>
        <position position="237"/>
    </location>
</feature>
<feature type="binding site" evidence="1">
    <location>
        <position position="163"/>
    </location>
    <ligand>
        <name>Mg(2+)</name>
        <dbReference type="ChEBI" id="CHEBI:18420"/>
    </ligand>
</feature>
<feature type="binding site" evidence="1">
    <location>
        <position position="192"/>
    </location>
    <ligand>
        <name>Mg(2+)</name>
        <dbReference type="ChEBI" id="CHEBI:18420"/>
    </ligand>
</feature>
<feature type="binding site" evidence="1">
    <location>
        <position position="215"/>
    </location>
    <ligand>
        <name>Mg(2+)</name>
        <dbReference type="ChEBI" id="CHEBI:18420"/>
    </ligand>
</feature>
<protein>
    <recommendedName>
        <fullName evidence="1">o-succinylbenzoate synthase</fullName>
        <shortName evidence="1">OSB synthase</shortName>
        <shortName evidence="1">OSBS</shortName>
        <ecNumber evidence="1">4.2.1.113</ecNumber>
    </recommendedName>
    <alternativeName>
        <fullName evidence="1">4-(2'-carboxyphenyl)-4-oxybutyric acid synthase</fullName>
    </alternativeName>
    <alternativeName>
        <fullName evidence="1">o-succinylbenzoic acid synthase</fullName>
    </alternativeName>
</protein>